<protein>
    <recommendedName>
        <fullName evidence="1">Large ribosomal subunit protein uL22</fullName>
    </recommendedName>
    <alternativeName>
        <fullName evidence="2">50S ribosomal protein L22</fullName>
    </alternativeName>
</protein>
<reference key="1">
    <citation type="journal article" date="2004" name="J. Bacteriol.">
        <title>Complete genome sequence of the genetically tractable hydrogenotrophic methanogen Methanococcus maripaludis.</title>
        <authorList>
            <person name="Hendrickson E.L."/>
            <person name="Kaul R."/>
            <person name="Zhou Y."/>
            <person name="Bovee D."/>
            <person name="Chapman P."/>
            <person name="Chung J."/>
            <person name="Conway de Macario E."/>
            <person name="Dodsworth J.A."/>
            <person name="Gillett W."/>
            <person name="Graham D.E."/>
            <person name="Hackett M."/>
            <person name="Haydock A.K."/>
            <person name="Kang A."/>
            <person name="Land M.L."/>
            <person name="Levy R."/>
            <person name="Lie T.J."/>
            <person name="Major T.A."/>
            <person name="Moore B.C."/>
            <person name="Porat I."/>
            <person name="Palmeiri A."/>
            <person name="Rouse G."/>
            <person name="Saenphimmachak C."/>
            <person name="Soell D."/>
            <person name="Van Dien S."/>
            <person name="Wang T."/>
            <person name="Whitman W.B."/>
            <person name="Xia Q."/>
            <person name="Zhang Y."/>
            <person name="Larimer F.W."/>
            <person name="Olson M.V."/>
            <person name="Leigh J.A."/>
        </authorList>
    </citation>
    <scope>NUCLEOTIDE SEQUENCE [LARGE SCALE GENOMIC DNA]</scope>
    <source>
        <strain>DSM 14266 / JCM 13030 / NBRC 101832 / S2 / LL</strain>
    </source>
</reference>
<proteinExistence type="inferred from homology"/>
<feature type="chain" id="PRO_0000125278" description="Large ribosomal subunit protein uL22">
    <location>
        <begin position="1"/>
        <end position="153"/>
    </location>
</feature>
<keyword id="KW-1185">Reference proteome</keyword>
<keyword id="KW-0687">Ribonucleoprotein</keyword>
<keyword id="KW-0689">Ribosomal protein</keyword>
<keyword id="KW-0694">RNA-binding</keyword>
<keyword id="KW-0699">rRNA-binding</keyword>
<gene>
    <name evidence="1" type="primary">rpl22</name>
    <name type="synonym">rplV</name>
    <name type="ordered locus">MMP1403</name>
</gene>
<comment type="function">
    <text evidence="1">This protein binds specifically to 23S rRNA. It makes multiple contacts with different domains of the 23S rRNA in the assembled 50S subunit and ribosome.</text>
</comment>
<comment type="function">
    <text evidence="1">The globular domain of the protein is located near the polypeptide exit tunnel on the outside of the subunit, while an extended beta-hairpin is found that lines the wall of the exit tunnel in the center of the 70S ribosome.</text>
</comment>
<comment type="subunit">
    <text evidence="1">Part of the 50S ribosomal subunit.</text>
</comment>
<comment type="similarity">
    <text evidence="1">Belongs to the universal ribosomal protein uL22 family.</text>
</comment>
<name>RL22_METMP</name>
<accession>P62649</accession>
<evidence type="ECO:0000255" key="1">
    <source>
        <dbReference type="HAMAP-Rule" id="MF_01331"/>
    </source>
</evidence>
<evidence type="ECO:0000305" key="2"/>
<dbReference type="EMBL" id="BX950229">
    <property type="protein sequence ID" value="CAF30959.1"/>
    <property type="molecule type" value="Genomic_DNA"/>
</dbReference>
<dbReference type="RefSeq" id="WP_011171347.1">
    <property type="nucleotide sequence ID" value="NC_005791.1"/>
</dbReference>
<dbReference type="SMR" id="P62649"/>
<dbReference type="STRING" id="267377.MMP1403"/>
<dbReference type="EnsemblBacteria" id="CAF30959">
    <property type="protein sequence ID" value="CAF30959"/>
    <property type="gene ID" value="MMP1403"/>
</dbReference>
<dbReference type="KEGG" id="mmp:MMP1403"/>
<dbReference type="PATRIC" id="fig|267377.15.peg.1439"/>
<dbReference type="eggNOG" id="arCOG04098">
    <property type="taxonomic scope" value="Archaea"/>
</dbReference>
<dbReference type="HOGENOM" id="CLU_083987_0_2_2"/>
<dbReference type="OrthoDB" id="314984at2157"/>
<dbReference type="Proteomes" id="UP000000590">
    <property type="component" value="Chromosome"/>
</dbReference>
<dbReference type="GO" id="GO:0022625">
    <property type="term" value="C:cytosolic large ribosomal subunit"/>
    <property type="evidence" value="ECO:0007669"/>
    <property type="project" value="TreeGrafter"/>
</dbReference>
<dbReference type="GO" id="GO:0019843">
    <property type="term" value="F:rRNA binding"/>
    <property type="evidence" value="ECO:0007669"/>
    <property type="project" value="UniProtKB-UniRule"/>
</dbReference>
<dbReference type="GO" id="GO:0003735">
    <property type="term" value="F:structural constituent of ribosome"/>
    <property type="evidence" value="ECO:0007669"/>
    <property type="project" value="InterPro"/>
</dbReference>
<dbReference type="GO" id="GO:0002181">
    <property type="term" value="P:cytoplasmic translation"/>
    <property type="evidence" value="ECO:0007669"/>
    <property type="project" value="TreeGrafter"/>
</dbReference>
<dbReference type="CDD" id="cd00336">
    <property type="entry name" value="Ribosomal_L22"/>
    <property type="match status" value="1"/>
</dbReference>
<dbReference type="Gene3D" id="3.90.470.10">
    <property type="entry name" value="Ribosomal protein L22/L17"/>
    <property type="match status" value="1"/>
</dbReference>
<dbReference type="HAMAP" id="MF_01331_A">
    <property type="entry name" value="Ribosomal_uL22_A"/>
    <property type="match status" value="1"/>
</dbReference>
<dbReference type="InterPro" id="IPR001063">
    <property type="entry name" value="Ribosomal_uL22"/>
</dbReference>
<dbReference type="InterPro" id="IPR018260">
    <property type="entry name" value="Ribosomal_uL22_CS"/>
</dbReference>
<dbReference type="InterPro" id="IPR005721">
    <property type="entry name" value="Ribosomal_uL22_euk/arc"/>
</dbReference>
<dbReference type="InterPro" id="IPR036394">
    <property type="entry name" value="Ribosomal_uL22_sf"/>
</dbReference>
<dbReference type="NCBIfam" id="NF003260">
    <property type="entry name" value="PRK04223.1"/>
    <property type="match status" value="1"/>
</dbReference>
<dbReference type="NCBIfam" id="TIGR01038">
    <property type="entry name" value="uL22_arch_euk"/>
    <property type="match status" value="1"/>
</dbReference>
<dbReference type="PANTHER" id="PTHR11593">
    <property type="entry name" value="60S RIBOSOMAL PROTEIN L17"/>
    <property type="match status" value="1"/>
</dbReference>
<dbReference type="PANTHER" id="PTHR11593:SF10">
    <property type="entry name" value="60S RIBOSOMAL PROTEIN L17"/>
    <property type="match status" value="1"/>
</dbReference>
<dbReference type="Pfam" id="PF00237">
    <property type="entry name" value="Ribosomal_L22"/>
    <property type="match status" value="1"/>
</dbReference>
<dbReference type="SUPFAM" id="SSF54843">
    <property type="entry name" value="Ribosomal protein L22"/>
    <property type="match status" value="1"/>
</dbReference>
<dbReference type="PROSITE" id="PS00464">
    <property type="entry name" value="RIBOSOMAL_L22"/>
    <property type="match status" value="1"/>
</dbReference>
<organism>
    <name type="scientific">Methanococcus maripaludis (strain DSM 14266 / JCM 13030 / NBRC 101832 / S2 / LL)</name>
    <dbReference type="NCBI Taxonomy" id="267377"/>
    <lineage>
        <taxon>Archaea</taxon>
        <taxon>Methanobacteriati</taxon>
        <taxon>Methanobacteriota</taxon>
        <taxon>Methanomada group</taxon>
        <taxon>Methanococci</taxon>
        <taxon>Methanococcales</taxon>
        <taxon>Methanococcaceae</taxon>
        <taxon>Methanococcus</taxon>
    </lineage>
</organism>
<sequence length="153" mass="17457">MAKLKYKVEADPKNTARAMGRTLRISRKHAIELCRELSGMKLDAAVAYLNRVIALETPVPFKVHNKDLPHRKGKIGTHSGRFPQKASLEILNVLDNAKKNAEQKGLNTEKLRIKHISSNRGFTIKRYMPRAFGRASPKNQETIHIQVILEEFY</sequence>